<name>ATPF_YERP3</name>
<proteinExistence type="inferred from homology"/>
<accession>A7FPE4</accession>
<dbReference type="EMBL" id="CP000720">
    <property type="protein sequence ID" value="ABS48211.1"/>
    <property type="molecule type" value="Genomic_DNA"/>
</dbReference>
<dbReference type="RefSeq" id="WP_002220762.1">
    <property type="nucleotide sequence ID" value="NC_009708.1"/>
</dbReference>
<dbReference type="SMR" id="A7FPE4"/>
<dbReference type="GeneID" id="57974599"/>
<dbReference type="KEGG" id="ypi:YpsIP31758_4180"/>
<dbReference type="HOGENOM" id="CLU_079215_4_5_6"/>
<dbReference type="Proteomes" id="UP000002412">
    <property type="component" value="Chromosome"/>
</dbReference>
<dbReference type="GO" id="GO:0005886">
    <property type="term" value="C:plasma membrane"/>
    <property type="evidence" value="ECO:0007669"/>
    <property type="project" value="UniProtKB-SubCell"/>
</dbReference>
<dbReference type="GO" id="GO:0045259">
    <property type="term" value="C:proton-transporting ATP synthase complex"/>
    <property type="evidence" value="ECO:0007669"/>
    <property type="project" value="UniProtKB-KW"/>
</dbReference>
<dbReference type="GO" id="GO:0046933">
    <property type="term" value="F:proton-transporting ATP synthase activity, rotational mechanism"/>
    <property type="evidence" value="ECO:0007669"/>
    <property type="project" value="UniProtKB-UniRule"/>
</dbReference>
<dbReference type="GO" id="GO:0046961">
    <property type="term" value="F:proton-transporting ATPase activity, rotational mechanism"/>
    <property type="evidence" value="ECO:0007669"/>
    <property type="project" value="TreeGrafter"/>
</dbReference>
<dbReference type="CDD" id="cd06503">
    <property type="entry name" value="ATP-synt_Fo_b"/>
    <property type="match status" value="1"/>
</dbReference>
<dbReference type="FunFam" id="1.20.5.620:FF:000001">
    <property type="entry name" value="ATP synthase subunit b"/>
    <property type="match status" value="1"/>
</dbReference>
<dbReference type="Gene3D" id="1.20.5.620">
    <property type="entry name" value="F1F0 ATP synthase subunit B, membrane domain"/>
    <property type="match status" value="1"/>
</dbReference>
<dbReference type="HAMAP" id="MF_01398">
    <property type="entry name" value="ATP_synth_b_bprime"/>
    <property type="match status" value="1"/>
</dbReference>
<dbReference type="InterPro" id="IPR028987">
    <property type="entry name" value="ATP_synth_B-like_membr_sf"/>
</dbReference>
<dbReference type="InterPro" id="IPR002146">
    <property type="entry name" value="ATP_synth_b/b'su_bac/chlpt"/>
</dbReference>
<dbReference type="InterPro" id="IPR005864">
    <property type="entry name" value="ATP_synth_F0_bsu_bac"/>
</dbReference>
<dbReference type="InterPro" id="IPR050059">
    <property type="entry name" value="ATP_synthase_B_chain"/>
</dbReference>
<dbReference type="NCBIfam" id="TIGR01144">
    <property type="entry name" value="ATP_synt_b"/>
    <property type="match status" value="1"/>
</dbReference>
<dbReference type="NCBIfam" id="NF004411">
    <property type="entry name" value="PRK05759.1-2"/>
    <property type="match status" value="1"/>
</dbReference>
<dbReference type="NCBIfam" id="NF004413">
    <property type="entry name" value="PRK05759.1-4"/>
    <property type="match status" value="1"/>
</dbReference>
<dbReference type="PANTHER" id="PTHR33445:SF1">
    <property type="entry name" value="ATP SYNTHASE SUBUNIT B"/>
    <property type="match status" value="1"/>
</dbReference>
<dbReference type="PANTHER" id="PTHR33445">
    <property type="entry name" value="ATP SYNTHASE SUBUNIT B', CHLOROPLASTIC"/>
    <property type="match status" value="1"/>
</dbReference>
<dbReference type="Pfam" id="PF00430">
    <property type="entry name" value="ATP-synt_B"/>
    <property type="match status" value="1"/>
</dbReference>
<dbReference type="SUPFAM" id="SSF81573">
    <property type="entry name" value="F1F0 ATP synthase subunit B, membrane domain"/>
    <property type="match status" value="1"/>
</dbReference>
<organism>
    <name type="scientific">Yersinia pseudotuberculosis serotype O:1b (strain IP 31758)</name>
    <dbReference type="NCBI Taxonomy" id="349747"/>
    <lineage>
        <taxon>Bacteria</taxon>
        <taxon>Pseudomonadati</taxon>
        <taxon>Pseudomonadota</taxon>
        <taxon>Gammaproteobacteria</taxon>
        <taxon>Enterobacterales</taxon>
        <taxon>Yersiniaceae</taxon>
        <taxon>Yersinia</taxon>
    </lineage>
</organism>
<feature type="chain" id="PRO_0000368884" description="ATP synthase subunit b">
    <location>
        <begin position="1"/>
        <end position="156"/>
    </location>
</feature>
<feature type="transmembrane region" description="Helical" evidence="1">
    <location>
        <begin position="11"/>
        <end position="31"/>
    </location>
</feature>
<comment type="function">
    <text evidence="1">F(1)F(0) ATP synthase produces ATP from ADP in the presence of a proton or sodium gradient. F-type ATPases consist of two structural domains, F(1) containing the extramembraneous catalytic core and F(0) containing the membrane proton channel, linked together by a central stalk and a peripheral stalk. During catalysis, ATP synthesis in the catalytic domain of F(1) is coupled via a rotary mechanism of the central stalk subunits to proton translocation.</text>
</comment>
<comment type="function">
    <text evidence="1">Component of the F(0) channel, it forms part of the peripheral stalk, linking F(1) to F(0).</text>
</comment>
<comment type="subunit">
    <text evidence="1">F-type ATPases have 2 components, F(1) - the catalytic core - and F(0) - the membrane proton channel. F(1) has five subunits: alpha(3), beta(3), gamma(1), delta(1), epsilon(1). F(0) has three main subunits: a(1), b(2) and c(10-14). The alpha and beta chains form an alternating ring which encloses part of the gamma chain. F(1) is attached to F(0) by a central stalk formed by the gamma and epsilon chains, while a peripheral stalk is formed by the delta and b chains.</text>
</comment>
<comment type="subcellular location">
    <subcellularLocation>
        <location evidence="1">Cell inner membrane</location>
        <topology evidence="1">Single-pass membrane protein</topology>
    </subcellularLocation>
</comment>
<comment type="similarity">
    <text evidence="1">Belongs to the ATPase B chain family.</text>
</comment>
<evidence type="ECO:0000255" key="1">
    <source>
        <dbReference type="HAMAP-Rule" id="MF_01398"/>
    </source>
</evidence>
<reference key="1">
    <citation type="journal article" date="2007" name="PLoS Genet.">
        <title>The complete genome sequence of Yersinia pseudotuberculosis IP31758, the causative agent of Far East scarlet-like fever.</title>
        <authorList>
            <person name="Eppinger M."/>
            <person name="Rosovitz M.J."/>
            <person name="Fricke W.F."/>
            <person name="Rasko D.A."/>
            <person name="Kokorina G."/>
            <person name="Fayolle C."/>
            <person name="Lindler L.E."/>
            <person name="Carniel E."/>
            <person name="Ravel J."/>
        </authorList>
    </citation>
    <scope>NUCLEOTIDE SEQUENCE [LARGE SCALE GENOMIC DNA]</scope>
    <source>
        <strain>IP 31758</strain>
    </source>
</reference>
<sequence>MNLNATILGQAIAFVLFVIFCMKYVWPPIMAAIEKRQQEIADGLSSAERAKKDLDLAQANATDQLKKAKAEAQVIIEQASKRKAQILDEAKAEAEQERNKIVAQAQAEIDAERKRAREELRKQVAMLAIAGAEKIIERSVDEAANSDIVDKLVAEL</sequence>
<protein>
    <recommendedName>
        <fullName evidence="1">ATP synthase subunit b</fullName>
    </recommendedName>
    <alternativeName>
        <fullName evidence="1">ATP synthase F(0) sector subunit b</fullName>
    </alternativeName>
    <alternativeName>
        <fullName evidence="1">ATPase subunit I</fullName>
    </alternativeName>
    <alternativeName>
        <fullName evidence="1">F-type ATPase subunit b</fullName>
        <shortName evidence="1">F-ATPase subunit b</shortName>
    </alternativeName>
</protein>
<gene>
    <name evidence="1" type="primary">atpF</name>
    <name type="ordered locus">YpsIP31758_4180</name>
</gene>
<keyword id="KW-0066">ATP synthesis</keyword>
<keyword id="KW-0997">Cell inner membrane</keyword>
<keyword id="KW-1003">Cell membrane</keyword>
<keyword id="KW-0138">CF(0)</keyword>
<keyword id="KW-0375">Hydrogen ion transport</keyword>
<keyword id="KW-0406">Ion transport</keyword>
<keyword id="KW-0472">Membrane</keyword>
<keyword id="KW-0812">Transmembrane</keyword>
<keyword id="KW-1133">Transmembrane helix</keyword>
<keyword id="KW-0813">Transport</keyword>